<sequence>MKIQDYTKQMVDEKSFIDMAYTLLNDKGETMNLYDIIDEFRALGDYEYEEIENRVVQFYTDLNTDGRFLNVGENLWGLRDWYSVDDIEEKIAPTIQKFDILDADDEEDQNLKLLGEDEMDDDDDIPAQTDDQEELNDPEDEQVEEEINHSDIVIEEDEDELDEDEEVFEDEEDFND</sequence>
<keyword id="KW-0240">DNA-directed RNA polymerase</keyword>
<keyword id="KW-0548">Nucleotidyltransferase</keyword>
<keyword id="KW-0804">Transcription</keyword>
<keyword id="KW-0808">Transferase</keyword>
<accession>P66714</accession>
<accession>Q99SD0</accession>
<gene>
    <name type="primary">rpoE</name>
    <name type="ordered locus">SAV2128</name>
</gene>
<comment type="function">
    <text evidence="1">Participates in both the initiation and recycling phases of transcription. In the presence of the delta subunit, RNAP displays an increased specificity of transcription, a decreased affinity for nucleic acids, and an increased efficiency of RNA synthesis because of enhanced recycling (By similarity).</text>
</comment>
<comment type="subunit">
    <text evidence="1">RNAP is composed of a core of 2 alpha, a beta and a beta' subunits. The core is associated with a delta subunit and one of several sigma factors (By similarity).</text>
</comment>
<comment type="similarity">
    <text evidence="4">Belongs to the RpoE family.</text>
</comment>
<proteinExistence type="inferred from homology"/>
<evidence type="ECO:0000250" key="1"/>
<evidence type="ECO:0000255" key="2">
    <source>
        <dbReference type="PROSITE-ProRule" id="PRU01261"/>
    </source>
</evidence>
<evidence type="ECO:0000256" key="3">
    <source>
        <dbReference type="SAM" id="MobiDB-lite"/>
    </source>
</evidence>
<evidence type="ECO:0000305" key="4"/>
<dbReference type="EMBL" id="BA000017">
    <property type="protein sequence ID" value="BAB58290.1"/>
    <property type="molecule type" value="Genomic_DNA"/>
</dbReference>
<dbReference type="RefSeq" id="WP_000701483.1">
    <property type="nucleotide sequence ID" value="NC_002758.2"/>
</dbReference>
<dbReference type="SMR" id="P66714"/>
<dbReference type="GeneID" id="98346435"/>
<dbReference type="KEGG" id="sav:SAV2128"/>
<dbReference type="HOGENOM" id="CLU_116648_1_0_9"/>
<dbReference type="PhylomeDB" id="P66714"/>
<dbReference type="Proteomes" id="UP000002481">
    <property type="component" value="Chromosome"/>
</dbReference>
<dbReference type="GO" id="GO:0000428">
    <property type="term" value="C:DNA-directed RNA polymerase complex"/>
    <property type="evidence" value="ECO:0007669"/>
    <property type="project" value="UniProtKB-KW"/>
</dbReference>
<dbReference type="GO" id="GO:0003899">
    <property type="term" value="F:DNA-directed RNA polymerase activity"/>
    <property type="evidence" value="ECO:0007669"/>
    <property type="project" value="UniProtKB-UniRule"/>
</dbReference>
<dbReference type="GO" id="GO:0006351">
    <property type="term" value="P:DNA-templated transcription"/>
    <property type="evidence" value="ECO:0007669"/>
    <property type="project" value="InterPro"/>
</dbReference>
<dbReference type="GO" id="GO:0006355">
    <property type="term" value="P:regulation of DNA-templated transcription"/>
    <property type="evidence" value="ECO:0007669"/>
    <property type="project" value="UniProtKB-UniRule"/>
</dbReference>
<dbReference type="Gene3D" id="1.10.10.1250">
    <property type="entry name" value="RNA polymerase, subunit delta, N-terminal domain"/>
    <property type="match status" value="1"/>
</dbReference>
<dbReference type="HAMAP" id="MF_00357">
    <property type="entry name" value="RNApol_bact_RpoE"/>
    <property type="match status" value="1"/>
</dbReference>
<dbReference type="InterPro" id="IPR007759">
    <property type="entry name" value="Asxl_HARE-HTH"/>
</dbReference>
<dbReference type="InterPro" id="IPR038087">
    <property type="entry name" value="RNAP_delta_N_dom_sf"/>
</dbReference>
<dbReference type="InterPro" id="IPR029757">
    <property type="entry name" value="RpoE"/>
</dbReference>
<dbReference type="NCBIfam" id="TIGR04567">
    <property type="entry name" value="RNAP_delt_lowGC"/>
    <property type="match status" value="1"/>
</dbReference>
<dbReference type="Pfam" id="PF05066">
    <property type="entry name" value="HARE-HTH"/>
    <property type="match status" value="1"/>
</dbReference>
<dbReference type="PROSITE" id="PS51913">
    <property type="entry name" value="HTH_HARE"/>
    <property type="match status" value="1"/>
</dbReference>
<organism>
    <name type="scientific">Staphylococcus aureus (strain Mu50 / ATCC 700699)</name>
    <dbReference type="NCBI Taxonomy" id="158878"/>
    <lineage>
        <taxon>Bacteria</taxon>
        <taxon>Bacillati</taxon>
        <taxon>Bacillota</taxon>
        <taxon>Bacilli</taxon>
        <taxon>Bacillales</taxon>
        <taxon>Staphylococcaceae</taxon>
        <taxon>Staphylococcus</taxon>
    </lineage>
</organism>
<name>RPOE_STAAM</name>
<feature type="chain" id="PRO_0000204321" description="Probable DNA-directed RNA polymerase subunit delta">
    <location>
        <begin position="1"/>
        <end position="176"/>
    </location>
</feature>
<feature type="domain" description="HTH HARE-type" evidence="2">
    <location>
        <begin position="14"/>
        <end position="81"/>
    </location>
</feature>
<feature type="region of interest" description="Disordered" evidence="3">
    <location>
        <begin position="114"/>
        <end position="176"/>
    </location>
</feature>
<feature type="compositionally biased region" description="Acidic residues" evidence="3">
    <location>
        <begin position="116"/>
        <end position="145"/>
    </location>
</feature>
<feature type="compositionally biased region" description="Acidic residues" evidence="3">
    <location>
        <begin position="153"/>
        <end position="176"/>
    </location>
</feature>
<protein>
    <recommendedName>
        <fullName>Probable DNA-directed RNA polymerase subunit delta</fullName>
    </recommendedName>
    <alternativeName>
        <fullName>RNAP delta factor</fullName>
    </alternativeName>
</protein>
<reference key="1">
    <citation type="journal article" date="2001" name="Lancet">
        <title>Whole genome sequencing of meticillin-resistant Staphylococcus aureus.</title>
        <authorList>
            <person name="Kuroda M."/>
            <person name="Ohta T."/>
            <person name="Uchiyama I."/>
            <person name="Baba T."/>
            <person name="Yuzawa H."/>
            <person name="Kobayashi I."/>
            <person name="Cui L."/>
            <person name="Oguchi A."/>
            <person name="Aoki K."/>
            <person name="Nagai Y."/>
            <person name="Lian J.-Q."/>
            <person name="Ito T."/>
            <person name="Kanamori M."/>
            <person name="Matsumaru H."/>
            <person name="Maruyama A."/>
            <person name="Murakami H."/>
            <person name="Hosoyama A."/>
            <person name="Mizutani-Ui Y."/>
            <person name="Takahashi N.K."/>
            <person name="Sawano T."/>
            <person name="Inoue R."/>
            <person name="Kaito C."/>
            <person name="Sekimizu K."/>
            <person name="Hirakawa H."/>
            <person name="Kuhara S."/>
            <person name="Goto S."/>
            <person name="Yabuzaki J."/>
            <person name="Kanehisa M."/>
            <person name="Yamashita A."/>
            <person name="Oshima K."/>
            <person name="Furuya K."/>
            <person name="Yoshino C."/>
            <person name="Shiba T."/>
            <person name="Hattori M."/>
            <person name="Ogasawara N."/>
            <person name="Hayashi H."/>
            <person name="Hiramatsu K."/>
        </authorList>
    </citation>
    <scope>NUCLEOTIDE SEQUENCE [LARGE SCALE GENOMIC DNA]</scope>
    <source>
        <strain>Mu50 / ATCC 700699</strain>
    </source>
</reference>